<reference key="1">
    <citation type="journal article" date="2004" name="Proc. Natl. Acad. Sci. U.S.A.">
        <title>Genomic plasticity of the causative agent of melioidosis, Burkholderia pseudomallei.</title>
        <authorList>
            <person name="Holden M.T.G."/>
            <person name="Titball R.W."/>
            <person name="Peacock S.J."/>
            <person name="Cerdeno-Tarraga A.-M."/>
            <person name="Atkins T."/>
            <person name="Crossman L.C."/>
            <person name="Pitt T."/>
            <person name="Churcher C."/>
            <person name="Mungall K.L."/>
            <person name="Bentley S.D."/>
            <person name="Sebaihia M."/>
            <person name="Thomson N.R."/>
            <person name="Bason N."/>
            <person name="Beacham I.R."/>
            <person name="Brooks K."/>
            <person name="Brown K.A."/>
            <person name="Brown N.F."/>
            <person name="Challis G.L."/>
            <person name="Cherevach I."/>
            <person name="Chillingworth T."/>
            <person name="Cronin A."/>
            <person name="Crossett B."/>
            <person name="Davis P."/>
            <person name="DeShazer D."/>
            <person name="Feltwell T."/>
            <person name="Fraser A."/>
            <person name="Hance Z."/>
            <person name="Hauser H."/>
            <person name="Holroyd S."/>
            <person name="Jagels K."/>
            <person name="Keith K.E."/>
            <person name="Maddison M."/>
            <person name="Moule S."/>
            <person name="Price C."/>
            <person name="Quail M.A."/>
            <person name="Rabbinowitsch E."/>
            <person name="Rutherford K."/>
            <person name="Sanders M."/>
            <person name="Simmonds M."/>
            <person name="Songsivilai S."/>
            <person name="Stevens K."/>
            <person name="Tumapa S."/>
            <person name="Vesaratchavest M."/>
            <person name="Whitehead S."/>
            <person name="Yeats C."/>
            <person name="Barrell B.G."/>
            <person name="Oyston P.C.F."/>
            <person name="Parkhill J."/>
        </authorList>
    </citation>
    <scope>NUCLEOTIDE SEQUENCE [LARGE SCALE GENOMIC DNA]</scope>
    <source>
        <strain>K96243</strain>
    </source>
</reference>
<gene>
    <name evidence="1" type="primary">kptA</name>
    <name type="ordered locus">BPSL0762</name>
</gene>
<sequence>MSSSYFIATRASKFLSYVLRHRPDSIGVTLDAQGWADVSELLTKAAAAGMALTLDELKQVVAENDKKRFVLNDDATRIRAAQGHSVDVDLQLPVKAPPPVLYHGTVGKSMADIRKQGLTPMNRHDVHLSPDRETATRVATRRGKPVILVIETYPLLRDGYQFRVSDNGVWLVPEVPAKYIKFPG</sequence>
<dbReference type="EC" id="2.7.1.-" evidence="1"/>
<dbReference type="EMBL" id="BX571965">
    <property type="protein sequence ID" value="CAH34754.1"/>
    <property type="molecule type" value="Genomic_DNA"/>
</dbReference>
<dbReference type="RefSeq" id="WP_011204889.1">
    <property type="nucleotide sequence ID" value="NZ_CP009538.1"/>
</dbReference>
<dbReference type="RefSeq" id="YP_107387.1">
    <property type="nucleotide sequence ID" value="NC_006350.1"/>
</dbReference>
<dbReference type="SMR" id="Q63WX9"/>
<dbReference type="STRING" id="272560.BPSL0762"/>
<dbReference type="KEGG" id="bps:BPSL0762"/>
<dbReference type="PATRIC" id="fig|272560.51.peg.847"/>
<dbReference type="eggNOG" id="COG1859">
    <property type="taxonomic scope" value="Bacteria"/>
</dbReference>
<dbReference type="Proteomes" id="UP000000605">
    <property type="component" value="Chromosome 1"/>
</dbReference>
<dbReference type="GO" id="GO:0003950">
    <property type="term" value="F:NAD+ poly-ADP-ribosyltransferase activity"/>
    <property type="evidence" value="ECO:0007669"/>
    <property type="project" value="InterPro"/>
</dbReference>
<dbReference type="GO" id="GO:0000215">
    <property type="term" value="F:tRNA 2'-phosphotransferase activity"/>
    <property type="evidence" value="ECO:0007669"/>
    <property type="project" value="TreeGrafter"/>
</dbReference>
<dbReference type="GO" id="GO:0006388">
    <property type="term" value="P:tRNA splicing, via endonucleolytic cleavage and ligation"/>
    <property type="evidence" value="ECO:0007669"/>
    <property type="project" value="UniProtKB-UniRule"/>
</dbReference>
<dbReference type="Gene3D" id="3.20.170.30">
    <property type="match status" value="1"/>
</dbReference>
<dbReference type="Gene3D" id="1.10.10.970">
    <property type="entry name" value="RNA 2'-phosphotransferase, Tpt1/KptA family, N-terminal domain"/>
    <property type="match status" value="1"/>
</dbReference>
<dbReference type="HAMAP" id="MF_00299">
    <property type="entry name" value="KptA"/>
    <property type="match status" value="1"/>
</dbReference>
<dbReference type="InterPro" id="IPR002745">
    <property type="entry name" value="Ptrans_KptA/Tpt1"/>
</dbReference>
<dbReference type="InterPro" id="IPR042081">
    <property type="entry name" value="RNA_2'-PTrans_C"/>
</dbReference>
<dbReference type="InterPro" id="IPR022928">
    <property type="entry name" value="RNA_2'-PTrans_KptA"/>
</dbReference>
<dbReference type="InterPro" id="IPR042080">
    <property type="entry name" value="RNA_2'-PTrans_N"/>
</dbReference>
<dbReference type="NCBIfam" id="NF002014">
    <property type="entry name" value="PRK00819.1-4"/>
    <property type="match status" value="1"/>
</dbReference>
<dbReference type="PANTHER" id="PTHR12684">
    <property type="entry name" value="PUTATIVE PHOSPHOTRANSFERASE"/>
    <property type="match status" value="1"/>
</dbReference>
<dbReference type="PANTHER" id="PTHR12684:SF2">
    <property type="entry name" value="TRNA 2'-PHOSPHOTRANSFERASE 1"/>
    <property type="match status" value="1"/>
</dbReference>
<dbReference type="Pfam" id="PF01885">
    <property type="entry name" value="PTS_2-RNA"/>
    <property type="match status" value="1"/>
</dbReference>
<dbReference type="SUPFAM" id="SSF56399">
    <property type="entry name" value="ADP-ribosylation"/>
    <property type="match status" value="1"/>
</dbReference>
<keyword id="KW-0520">NAD</keyword>
<keyword id="KW-1185">Reference proteome</keyword>
<keyword id="KW-0808">Transferase</keyword>
<evidence type="ECO:0000255" key="1">
    <source>
        <dbReference type="HAMAP-Rule" id="MF_00299"/>
    </source>
</evidence>
<proteinExistence type="inferred from homology"/>
<feature type="chain" id="PRO_0000231951" description="Probable RNA 2'-phosphotransferase">
    <location>
        <begin position="1"/>
        <end position="184"/>
    </location>
</feature>
<comment type="function">
    <text evidence="1">Removes the 2'-phosphate from RNA via an intermediate in which the phosphate is ADP-ribosylated by NAD followed by a presumed transesterification to release the RNA and generate ADP-ribose 1''-2''-cyclic phosphate (APPR&gt;P). May function as an ADP-ribosylase.</text>
</comment>
<comment type="similarity">
    <text evidence="1">Belongs to the KptA/TPT1 family.</text>
</comment>
<organism>
    <name type="scientific">Burkholderia pseudomallei (strain K96243)</name>
    <dbReference type="NCBI Taxonomy" id="272560"/>
    <lineage>
        <taxon>Bacteria</taxon>
        <taxon>Pseudomonadati</taxon>
        <taxon>Pseudomonadota</taxon>
        <taxon>Betaproteobacteria</taxon>
        <taxon>Burkholderiales</taxon>
        <taxon>Burkholderiaceae</taxon>
        <taxon>Burkholderia</taxon>
        <taxon>pseudomallei group</taxon>
    </lineage>
</organism>
<name>KPTA_BURPS</name>
<protein>
    <recommendedName>
        <fullName evidence="1">Probable RNA 2'-phosphotransferase</fullName>
        <ecNumber evidence="1">2.7.1.-</ecNumber>
    </recommendedName>
</protein>
<accession>Q63WX9</accession>